<accession>B2V6N8</accession>
<protein>
    <recommendedName>
        <fullName evidence="1">ATP synthase subunit b</fullName>
    </recommendedName>
    <alternativeName>
        <fullName evidence="1">ATP synthase F(0) sector subunit b</fullName>
    </alternativeName>
    <alternativeName>
        <fullName evidence="1">ATPase subunit I</fullName>
    </alternativeName>
    <alternativeName>
        <fullName evidence="1">F-type ATPase subunit b</fullName>
        <shortName evidence="1">F-ATPase subunit b</shortName>
    </alternativeName>
</protein>
<gene>
    <name evidence="1" type="primary">atpF</name>
    <name type="ordered locus">SYO3AOP1_1622</name>
</gene>
<comment type="function">
    <text evidence="1">F(1)F(0) ATP synthase produces ATP from ADP in the presence of a proton or sodium gradient. F-type ATPases consist of two structural domains, F(1) containing the extramembraneous catalytic core and F(0) containing the membrane proton channel, linked together by a central stalk and a peripheral stalk. During catalysis, ATP synthesis in the catalytic domain of F(1) is coupled via a rotary mechanism of the central stalk subunits to proton translocation.</text>
</comment>
<comment type="function">
    <text evidence="1">Component of the F(0) channel, it forms part of the peripheral stalk, linking F(1) to F(0).</text>
</comment>
<comment type="subunit">
    <text evidence="1">F-type ATPases have 2 components, F(1) - the catalytic core - and F(0) - the membrane proton channel. F(1) has five subunits: alpha(3), beta(3), gamma(1), delta(1), epsilon(1). F(0) has three main subunits: a(1), b(2) and c(10-14). The alpha and beta chains form an alternating ring which encloses part of the gamma chain. F(1) is attached to F(0) by a central stalk formed by the gamma and epsilon chains, while a peripheral stalk is formed by the delta and b chains.</text>
</comment>
<comment type="subcellular location">
    <subcellularLocation>
        <location evidence="1">Cell inner membrane</location>
        <topology evidence="1">Single-pass membrane protein</topology>
    </subcellularLocation>
</comment>
<comment type="similarity">
    <text evidence="1">Belongs to the ATPase B chain family.</text>
</comment>
<proteinExistence type="inferred from homology"/>
<keyword id="KW-0066">ATP synthesis</keyword>
<keyword id="KW-0997">Cell inner membrane</keyword>
<keyword id="KW-1003">Cell membrane</keyword>
<keyword id="KW-0138">CF(0)</keyword>
<keyword id="KW-0375">Hydrogen ion transport</keyword>
<keyword id="KW-0406">Ion transport</keyword>
<keyword id="KW-0472">Membrane</keyword>
<keyword id="KW-0812">Transmembrane</keyword>
<keyword id="KW-1133">Transmembrane helix</keyword>
<keyword id="KW-0813">Transport</keyword>
<organism>
    <name type="scientific">Sulfurihydrogenibium sp. (strain YO3AOP1)</name>
    <dbReference type="NCBI Taxonomy" id="436114"/>
    <lineage>
        <taxon>Bacteria</taxon>
        <taxon>Pseudomonadati</taxon>
        <taxon>Aquificota</taxon>
        <taxon>Aquificia</taxon>
        <taxon>Aquificales</taxon>
        <taxon>Hydrogenothermaceae</taxon>
        <taxon>Sulfurihydrogenibium</taxon>
    </lineage>
</organism>
<feature type="chain" id="PRO_5000370755" description="ATP synthase subunit b">
    <location>
        <begin position="1"/>
        <end position="180"/>
    </location>
</feature>
<feature type="transmembrane region" description="Helical" evidence="1">
    <location>
        <begin position="26"/>
        <end position="48"/>
    </location>
</feature>
<reference key="1">
    <citation type="journal article" date="2009" name="J. Bacteriol.">
        <title>Complete and draft genome sequences of six members of the Aquificales.</title>
        <authorList>
            <person name="Reysenbach A.-L."/>
            <person name="Hamamura N."/>
            <person name="Podar M."/>
            <person name="Griffiths E."/>
            <person name="Ferreira S."/>
            <person name="Hochstein R."/>
            <person name="Heidelberg J."/>
            <person name="Johnson J."/>
            <person name="Mead D."/>
            <person name="Pohorille A."/>
            <person name="Sarmiento M."/>
            <person name="Schweighofer K."/>
            <person name="Seshadri R."/>
            <person name="Voytek M.A."/>
        </authorList>
    </citation>
    <scope>NUCLEOTIDE SEQUENCE [LARGE SCALE GENOMIC DNA]</scope>
    <source>
        <strain>YO3AOP1</strain>
    </source>
</reference>
<name>ATPF_SULSY</name>
<evidence type="ECO:0000255" key="1">
    <source>
        <dbReference type="HAMAP-Rule" id="MF_01398"/>
    </source>
</evidence>
<sequence length="180" mass="20556">MKKVVLFTLLITGLSFAGEQKEANESMILFWKAVNTVILLGLVYYFGGKHIKKFLNGRRENVANMVLEAQKMREDSQKALEDAKRKLEEAKYKLEESIKISKETAEREREHAIMQANEIAERIKMQAKETINIEIRKAEAKLKKYAAEKALEVSKSLIESSINPQTSNELIKKTIKGLEA</sequence>
<dbReference type="EMBL" id="CP001080">
    <property type="protein sequence ID" value="ACD67220.1"/>
    <property type="molecule type" value="Genomic_DNA"/>
</dbReference>
<dbReference type="RefSeq" id="WP_012460276.1">
    <property type="nucleotide sequence ID" value="NC_010730.1"/>
</dbReference>
<dbReference type="SMR" id="B2V6N8"/>
<dbReference type="STRING" id="436114.SYO3AOP1_1622"/>
<dbReference type="KEGG" id="sul:SYO3AOP1_1622"/>
<dbReference type="eggNOG" id="COG0711">
    <property type="taxonomic scope" value="Bacteria"/>
</dbReference>
<dbReference type="HOGENOM" id="CLU_128247_0_0_0"/>
<dbReference type="GO" id="GO:0005886">
    <property type="term" value="C:plasma membrane"/>
    <property type="evidence" value="ECO:0007669"/>
    <property type="project" value="UniProtKB-SubCell"/>
</dbReference>
<dbReference type="GO" id="GO:0045259">
    <property type="term" value="C:proton-transporting ATP synthase complex"/>
    <property type="evidence" value="ECO:0007669"/>
    <property type="project" value="UniProtKB-KW"/>
</dbReference>
<dbReference type="GO" id="GO:0046933">
    <property type="term" value="F:proton-transporting ATP synthase activity, rotational mechanism"/>
    <property type="evidence" value="ECO:0007669"/>
    <property type="project" value="UniProtKB-UniRule"/>
</dbReference>
<dbReference type="CDD" id="cd06503">
    <property type="entry name" value="ATP-synt_Fo_b"/>
    <property type="match status" value="1"/>
</dbReference>
<dbReference type="HAMAP" id="MF_01398">
    <property type="entry name" value="ATP_synth_b_bprime"/>
    <property type="match status" value="1"/>
</dbReference>
<dbReference type="InterPro" id="IPR002146">
    <property type="entry name" value="ATP_synth_b/b'su_bac/chlpt"/>
</dbReference>
<dbReference type="PANTHER" id="PTHR34264">
    <property type="entry name" value="ATP SYNTHASE SUBUNIT B, CHLOROPLASTIC"/>
    <property type="match status" value="1"/>
</dbReference>
<dbReference type="PANTHER" id="PTHR34264:SF3">
    <property type="entry name" value="ATP SYNTHASE SUBUNIT B, CHLOROPLASTIC"/>
    <property type="match status" value="1"/>
</dbReference>
<dbReference type="Pfam" id="PF00430">
    <property type="entry name" value="ATP-synt_B"/>
    <property type="match status" value="1"/>
</dbReference>